<name>Y544_BACC4</name>
<feature type="chain" id="PRO_1000198208" description="UPF0295 protein BCB4264_A0544">
    <location>
        <begin position="1"/>
        <end position="118"/>
    </location>
</feature>
<feature type="transmembrane region" description="Helical" evidence="1">
    <location>
        <begin position="12"/>
        <end position="32"/>
    </location>
</feature>
<feature type="transmembrane region" description="Helical" evidence="1">
    <location>
        <begin position="43"/>
        <end position="63"/>
    </location>
</feature>
<keyword id="KW-1003">Cell membrane</keyword>
<keyword id="KW-0472">Membrane</keyword>
<keyword id="KW-0812">Transmembrane</keyword>
<keyword id="KW-1133">Transmembrane helix</keyword>
<dbReference type="EMBL" id="CP001176">
    <property type="protein sequence ID" value="ACK61251.1"/>
    <property type="molecule type" value="Genomic_DNA"/>
</dbReference>
<dbReference type="RefSeq" id="WP_000025058.1">
    <property type="nucleotide sequence ID" value="NC_011725.1"/>
</dbReference>
<dbReference type="SMR" id="B7H9T4"/>
<dbReference type="KEGG" id="bcb:BCB4264_A0544"/>
<dbReference type="HOGENOM" id="CLU_143991_0_0_9"/>
<dbReference type="Proteomes" id="UP000007096">
    <property type="component" value="Chromosome"/>
</dbReference>
<dbReference type="GO" id="GO:0005886">
    <property type="term" value="C:plasma membrane"/>
    <property type="evidence" value="ECO:0007669"/>
    <property type="project" value="UniProtKB-SubCell"/>
</dbReference>
<dbReference type="HAMAP" id="MF_01502">
    <property type="entry name" value="UPF0295"/>
    <property type="match status" value="1"/>
</dbReference>
<dbReference type="InterPro" id="IPR020912">
    <property type="entry name" value="UPF0295"/>
</dbReference>
<dbReference type="NCBIfam" id="NF002796">
    <property type="entry name" value="PRK02935.1"/>
    <property type="match status" value="1"/>
</dbReference>
<dbReference type="Pfam" id="PF11023">
    <property type="entry name" value="DUF2614"/>
    <property type="match status" value="1"/>
</dbReference>
<sequence length="118" mass="13557">MSIKYSNKINKIRTFALSLVFIGLFIAYLGVFFRENIIIMTTFMMVGFLAVIASTVVYFWIGMLSTKTIQIICPSCDKPTKMLGRVDACMHCNQPLTLDRDLEGKEFDEKYNKKSYKS</sequence>
<comment type="subcellular location">
    <subcellularLocation>
        <location evidence="1">Cell membrane</location>
        <topology evidence="1">Multi-pass membrane protein</topology>
    </subcellularLocation>
</comment>
<comment type="similarity">
    <text evidence="1">Belongs to the UPF0295 family.</text>
</comment>
<reference key="1">
    <citation type="submission" date="2008-10" db="EMBL/GenBank/DDBJ databases">
        <title>Genome sequence of Bacillus cereus B4264.</title>
        <authorList>
            <person name="Dodson R.J."/>
            <person name="Durkin A.S."/>
            <person name="Rosovitz M.J."/>
            <person name="Rasko D.A."/>
            <person name="Hoffmaster A."/>
            <person name="Ravel J."/>
            <person name="Sutton G."/>
        </authorList>
    </citation>
    <scope>NUCLEOTIDE SEQUENCE [LARGE SCALE GENOMIC DNA]</scope>
    <source>
        <strain>B4264</strain>
    </source>
</reference>
<organism>
    <name type="scientific">Bacillus cereus (strain B4264)</name>
    <dbReference type="NCBI Taxonomy" id="405532"/>
    <lineage>
        <taxon>Bacteria</taxon>
        <taxon>Bacillati</taxon>
        <taxon>Bacillota</taxon>
        <taxon>Bacilli</taxon>
        <taxon>Bacillales</taxon>
        <taxon>Bacillaceae</taxon>
        <taxon>Bacillus</taxon>
        <taxon>Bacillus cereus group</taxon>
    </lineage>
</organism>
<protein>
    <recommendedName>
        <fullName evidence="1">UPF0295 protein BCB4264_A0544</fullName>
    </recommendedName>
</protein>
<gene>
    <name type="ordered locus">BCB4264_A0544</name>
</gene>
<accession>B7H9T4</accession>
<proteinExistence type="inferred from homology"/>
<evidence type="ECO:0000255" key="1">
    <source>
        <dbReference type="HAMAP-Rule" id="MF_01502"/>
    </source>
</evidence>